<evidence type="ECO:0000250" key="1"/>
<evidence type="ECO:0000255" key="2">
    <source>
        <dbReference type="PROSITE-ProRule" id="PRU00464"/>
    </source>
</evidence>
<evidence type="ECO:0000256" key="3">
    <source>
        <dbReference type="SAM" id="MobiDB-lite"/>
    </source>
</evidence>
<evidence type="ECO:0000305" key="4"/>
<dbReference type="EC" id="3.6.1.29"/>
<dbReference type="EMBL" id="FN393063">
    <property type="protein sequence ID" value="CAY78805.1"/>
    <property type="status" value="ALT_INIT"/>
    <property type="molecule type" value="Genomic_DNA"/>
</dbReference>
<dbReference type="SMR" id="C8Z5L6"/>
<dbReference type="HOGENOM" id="CLU_056776_7_2_1"/>
<dbReference type="OrthoDB" id="13869at4893"/>
<dbReference type="Proteomes" id="UP000000286">
    <property type="component" value="Chromosome IV, Scaffold EC1118_1D0"/>
</dbReference>
<dbReference type="GO" id="GO:0005739">
    <property type="term" value="C:mitochondrion"/>
    <property type="evidence" value="ECO:0007669"/>
    <property type="project" value="UniProtKB-SubCell"/>
</dbReference>
<dbReference type="GO" id="GO:0005634">
    <property type="term" value="C:nucleus"/>
    <property type="evidence" value="ECO:0007669"/>
    <property type="project" value="UniProtKB-SubCell"/>
</dbReference>
<dbReference type="GO" id="GO:0047710">
    <property type="term" value="F:bis(5'-adenosyl)-triphosphatase activity"/>
    <property type="evidence" value="ECO:0007669"/>
    <property type="project" value="UniProtKB-EC"/>
</dbReference>
<dbReference type="GO" id="GO:0000166">
    <property type="term" value="F:nucleotide binding"/>
    <property type="evidence" value="ECO:0007669"/>
    <property type="project" value="UniProtKB-KW"/>
</dbReference>
<dbReference type="CDD" id="cd01275">
    <property type="entry name" value="FHIT"/>
    <property type="match status" value="1"/>
</dbReference>
<dbReference type="Gene3D" id="3.30.428.10">
    <property type="entry name" value="HIT-like"/>
    <property type="match status" value="1"/>
</dbReference>
<dbReference type="InterPro" id="IPR051884">
    <property type="entry name" value="Bis(5'-adenosyl)-TPase_reg"/>
</dbReference>
<dbReference type="InterPro" id="IPR039383">
    <property type="entry name" value="FHIT"/>
</dbReference>
<dbReference type="InterPro" id="IPR019808">
    <property type="entry name" value="Histidine_triad_CS"/>
</dbReference>
<dbReference type="InterPro" id="IPR011146">
    <property type="entry name" value="HIT-like"/>
</dbReference>
<dbReference type="InterPro" id="IPR036265">
    <property type="entry name" value="HIT-like_sf"/>
</dbReference>
<dbReference type="PANTHER" id="PTHR46243">
    <property type="entry name" value="BIS(5'-ADENOSYL)-TRIPHOSPHATASE"/>
    <property type="match status" value="1"/>
</dbReference>
<dbReference type="PANTHER" id="PTHR46243:SF1">
    <property type="entry name" value="BIS(5'-ADENOSYL)-TRIPHOSPHATASE"/>
    <property type="match status" value="1"/>
</dbReference>
<dbReference type="Pfam" id="PF01230">
    <property type="entry name" value="HIT"/>
    <property type="match status" value="1"/>
</dbReference>
<dbReference type="SUPFAM" id="SSF54197">
    <property type="entry name" value="HIT-like"/>
    <property type="match status" value="1"/>
</dbReference>
<dbReference type="PROSITE" id="PS00892">
    <property type="entry name" value="HIT_1"/>
    <property type="match status" value="1"/>
</dbReference>
<dbReference type="PROSITE" id="PS51084">
    <property type="entry name" value="HIT_2"/>
    <property type="match status" value="1"/>
</dbReference>
<sequence>MNKPIYFSKFLVTEQVFYKSKYTYALVNLKPIVPGHVLIVPLRTTVLNLSDLTMPESQDYFKTLQLIHRFIKWQYKADSINVAIQDGPEAGQSVPHLHTHIIPRYKINNVGDLIYDKLDHWDGNGTLTDWQGRRDEYLGVGGRQARKNNSTSATVDGDELSQGPNVLKPDSQRKVRALTEMKKEAEDLQARLEEFVSSDPGLTQWL</sequence>
<keyword id="KW-0963">Cytoplasm</keyword>
<keyword id="KW-0378">Hydrolase</keyword>
<keyword id="KW-0496">Mitochondrion</keyword>
<keyword id="KW-0547">Nucleotide-binding</keyword>
<keyword id="KW-0539">Nucleus</keyword>
<accession>C8Z5L6</accession>
<protein>
    <recommendedName>
        <fullName>Bis(5'-adenosyl)-triphosphatase</fullName>
        <ecNumber>3.6.1.29</ecNumber>
    </recommendedName>
    <alternativeName>
        <fullName>AP3A hydrolase</fullName>
        <shortName>AP3Aase</shortName>
    </alternativeName>
    <alternativeName>
        <fullName>Diadenosine 5',5'''-P1,P3-triphosphate hydrolase</fullName>
    </alternativeName>
    <alternativeName>
        <fullName>Dinucleosidetriphosphatase</fullName>
    </alternativeName>
    <alternativeName>
        <fullName>Hit family protein 2</fullName>
    </alternativeName>
</protein>
<organism>
    <name type="scientific">Saccharomyces cerevisiae (strain Lalvin EC1118 / Prise de mousse)</name>
    <name type="common">Baker's yeast</name>
    <dbReference type="NCBI Taxonomy" id="643680"/>
    <lineage>
        <taxon>Eukaryota</taxon>
        <taxon>Fungi</taxon>
        <taxon>Dikarya</taxon>
        <taxon>Ascomycota</taxon>
        <taxon>Saccharomycotina</taxon>
        <taxon>Saccharomycetes</taxon>
        <taxon>Saccharomycetales</taxon>
        <taxon>Saccharomycetaceae</taxon>
        <taxon>Saccharomyces</taxon>
    </lineage>
</organism>
<proteinExistence type="inferred from homology"/>
<comment type="function">
    <text evidence="1">Cleaves A-5'-PPP-5'A to yield AMP and ADP. Can cleave all dinucleoside polyphosphates, provided the phosphate chain contains at least 3 phosphates and that 1 of the 2 bases composing the nucleotide is a purine. Is most effective on dinucleoside triphosphates. Negatively regulates intracellular dinucleoside polyphosphate levels, which elevate following heat shock (By similarity).</text>
</comment>
<comment type="catalytic activity">
    <reaction>
        <text>P(1),P(3)-bis(5'-adenosyl) triphosphate + H2O = AMP + ADP + 2 H(+)</text>
        <dbReference type="Rhea" id="RHEA:13893"/>
        <dbReference type="ChEBI" id="CHEBI:15377"/>
        <dbReference type="ChEBI" id="CHEBI:15378"/>
        <dbReference type="ChEBI" id="CHEBI:58529"/>
        <dbReference type="ChEBI" id="CHEBI:456215"/>
        <dbReference type="ChEBI" id="CHEBI:456216"/>
        <dbReference type="EC" id="3.6.1.29"/>
    </reaction>
</comment>
<comment type="cofactor">
    <cofactor evidence="1">
        <name>Mn(2+)</name>
        <dbReference type="ChEBI" id="CHEBI:29035"/>
    </cofactor>
    <text evidence="1">Divalent metal cations. Mn(2+) is the preferred ion.</text>
</comment>
<comment type="subunit">
    <text evidence="1">Homodimer.</text>
</comment>
<comment type="subcellular location">
    <subcellularLocation>
        <location evidence="1">Cytoplasm</location>
    </subcellularLocation>
    <subcellularLocation>
        <location evidence="1">Nucleus</location>
    </subcellularLocation>
    <subcellularLocation>
        <location evidence="1">Mitochondrion</location>
    </subcellularLocation>
</comment>
<comment type="sequence caution" evidence="4">
    <conflict type="erroneous initiation">
        <sequence resource="EMBL-CDS" id="CAY78805"/>
    </conflict>
</comment>
<gene>
    <name type="primary">HNT2</name>
    <name type="synonym">APH1</name>
    <name type="ORF">EC1118_1D0_5886g</name>
</gene>
<feature type="chain" id="PRO_0000392107" description="Bis(5'-adenosyl)-triphosphatase">
    <location>
        <begin position="1"/>
        <end position="206"/>
    </location>
</feature>
<feature type="domain" description="HIT" evidence="2">
    <location>
        <begin position="3"/>
        <end position="115"/>
    </location>
</feature>
<feature type="region of interest" description="Disordered" evidence="3">
    <location>
        <begin position="143"/>
        <end position="164"/>
    </location>
</feature>
<feature type="short sequence motif" description="Histidine triad motif">
    <location>
        <begin position="96"/>
        <end position="100"/>
    </location>
</feature>
<feature type="active site" description="Tele-AMP-histidine intermediate" evidence="1">
    <location>
        <position position="98"/>
    </location>
</feature>
<reference key="1">
    <citation type="journal article" date="2009" name="Proc. Natl. Acad. Sci. U.S.A.">
        <title>Eukaryote-to-eukaryote gene transfer events revealed by the genome sequence of the wine yeast Saccharomyces cerevisiae EC1118.</title>
        <authorList>
            <person name="Novo M."/>
            <person name="Bigey F."/>
            <person name="Beyne E."/>
            <person name="Galeote V."/>
            <person name="Gavory F."/>
            <person name="Mallet S."/>
            <person name="Cambon B."/>
            <person name="Legras J.-L."/>
            <person name="Wincker P."/>
            <person name="Casaregola S."/>
            <person name="Dequin S."/>
        </authorList>
    </citation>
    <scope>NUCLEOTIDE SEQUENCE [LARGE SCALE GENOMIC DNA]</scope>
    <source>
        <strain>Lalvin EC1118 / Prise de mousse</strain>
    </source>
</reference>
<name>HNT2_YEAS8</name>